<name>CRBN_DROPS</name>
<protein>
    <recommendedName>
        <fullName evidence="2">Protein cereblon</fullName>
    </recommendedName>
    <alternativeName>
        <fullName evidence="2">Protein ohgata</fullName>
    </alternativeName>
</protein>
<accession>Q29B72</accession>
<keyword id="KW-0479">Metal-binding</keyword>
<keyword id="KW-0539">Nucleus</keyword>
<keyword id="KW-1185">Reference proteome</keyword>
<keyword id="KW-0832">Ubl conjugation</keyword>
<keyword id="KW-0833">Ubl conjugation pathway</keyword>
<keyword id="KW-0862">Zinc</keyword>
<comment type="function">
    <text evidence="2">Substrate recognition component of a DCX (DDB1-CUL4-X-box) E3 protein ligase complex that mediates the ubiquitination and subsequent proteasomal degradation of target proteins. Has an essential role in mediating growth by negatively regulating insulin signaling. It also has a role in maintaining presynaptic function in the neuromuscular junction synapses of third-instar larvae.</text>
</comment>
<comment type="pathway">
    <text evidence="1">Protein modification; protein ubiquitination.</text>
</comment>
<comment type="subunit">
    <text evidence="1 2">Likely a component of a DCX (DDB1-CUL4-X-box) protein ligase complex (By similarity). May interact with pic/DDB1 (By similarity).</text>
</comment>
<comment type="subcellular location">
    <subcellularLocation>
        <location evidence="2">Nucleus</location>
    </subcellularLocation>
</comment>
<comment type="PTM">
    <text evidence="2">Ubiquitinated.</text>
</comment>
<comment type="similarity">
    <text evidence="6">Belongs to the CRBN family.</text>
</comment>
<dbReference type="EMBL" id="CM000070">
    <property type="protein sequence ID" value="EAL27126.2"/>
    <property type="molecule type" value="Genomic_DNA"/>
</dbReference>
<dbReference type="RefSeq" id="XP_001357990.2">
    <property type="nucleotide sequence ID" value="XM_001357953.3"/>
</dbReference>
<dbReference type="SMR" id="Q29B72"/>
<dbReference type="FunCoup" id="Q29B72">
    <property type="interactions" value="1510"/>
</dbReference>
<dbReference type="STRING" id="46245.Q29B72"/>
<dbReference type="EnsemblMetazoa" id="FBtr0284214">
    <property type="protein sequence ID" value="FBpp0282652"/>
    <property type="gene ID" value="FBgn0077788"/>
</dbReference>
<dbReference type="GeneID" id="4800775"/>
<dbReference type="KEGG" id="dpo:4800775"/>
<dbReference type="CTD" id="41230"/>
<dbReference type="eggNOG" id="KOG1400">
    <property type="taxonomic scope" value="Eukaryota"/>
</dbReference>
<dbReference type="HOGENOM" id="CLU_028769_0_0_1"/>
<dbReference type="InParanoid" id="Q29B72"/>
<dbReference type="OMA" id="SPQYIAR"/>
<dbReference type="UniPathway" id="UPA00143"/>
<dbReference type="Proteomes" id="UP000001819">
    <property type="component" value="Chromosome 2"/>
</dbReference>
<dbReference type="Bgee" id="FBgn0077788">
    <property type="expression patterns" value="Expressed in male reproductive system and 3 other cell types or tissues"/>
</dbReference>
<dbReference type="GO" id="GO:0005634">
    <property type="term" value="C:nucleus"/>
    <property type="evidence" value="ECO:0007669"/>
    <property type="project" value="UniProtKB-SubCell"/>
</dbReference>
<dbReference type="GO" id="GO:0046872">
    <property type="term" value="F:metal ion binding"/>
    <property type="evidence" value="ECO:0007669"/>
    <property type="project" value="UniProtKB-KW"/>
</dbReference>
<dbReference type="GO" id="GO:0016567">
    <property type="term" value="P:protein ubiquitination"/>
    <property type="evidence" value="ECO:0007669"/>
    <property type="project" value="UniProtKB-UniPathway"/>
</dbReference>
<dbReference type="CDD" id="cd15777">
    <property type="entry name" value="CRBN_C_like"/>
    <property type="match status" value="1"/>
</dbReference>
<dbReference type="FunFam" id="2.170.150.20:FF:000005">
    <property type="entry name" value="Blast:Protein cereblon homolog"/>
    <property type="match status" value="1"/>
</dbReference>
<dbReference type="Gene3D" id="1.20.58.1480">
    <property type="match status" value="1"/>
</dbReference>
<dbReference type="Gene3D" id="2.170.150.20">
    <property type="entry name" value="Peptide methionine sulfoxide reductase"/>
    <property type="match status" value="1"/>
</dbReference>
<dbReference type="InterPro" id="IPR034750">
    <property type="entry name" value="CULT"/>
</dbReference>
<dbReference type="InterPro" id="IPR003111">
    <property type="entry name" value="Lon_prtase_N"/>
</dbReference>
<dbReference type="InterPro" id="IPR004910">
    <property type="entry name" value="Yippee/Mis18/Cereblon"/>
</dbReference>
<dbReference type="Pfam" id="PF03226">
    <property type="entry name" value="Yippee-Mis18"/>
    <property type="match status" value="1"/>
</dbReference>
<dbReference type="PROSITE" id="PS51788">
    <property type="entry name" value="CULT"/>
    <property type="match status" value="1"/>
</dbReference>
<dbReference type="PROSITE" id="PS51787">
    <property type="entry name" value="LON_N"/>
    <property type="match status" value="1"/>
</dbReference>
<evidence type="ECO:0000250" key="1">
    <source>
        <dbReference type="UniProtKB" id="Q96SW2"/>
    </source>
</evidence>
<evidence type="ECO:0000250" key="2">
    <source>
        <dbReference type="UniProtKB" id="Q9VH36"/>
    </source>
</evidence>
<evidence type="ECO:0000255" key="3">
    <source>
        <dbReference type="PROSITE-ProRule" id="PRU01123"/>
    </source>
</evidence>
<evidence type="ECO:0000255" key="4">
    <source>
        <dbReference type="PROSITE-ProRule" id="PRU01124"/>
    </source>
</evidence>
<evidence type="ECO:0000256" key="5">
    <source>
        <dbReference type="SAM" id="MobiDB-lite"/>
    </source>
</evidence>
<evidence type="ECO:0000305" key="6"/>
<feature type="chain" id="PRO_0000393884" description="Protein cereblon">
    <location>
        <begin position="1"/>
        <end position="616"/>
    </location>
</feature>
<feature type="domain" description="Lon N-terminal" evidence="3">
    <location>
        <begin position="257"/>
        <end position="482"/>
    </location>
</feature>
<feature type="domain" description="CULT" evidence="4">
    <location>
        <begin position="481"/>
        <end position="590"/>
    </location>
</feature>
<feature type="region of interest" description="Disordered" evidence="5">
    <location>
        <begin position="1"/>
        <end position="39"/>
    </location>
</feature>
<feature type="region of interest" description="Disordered" evidence="5">
    <location>
        <begin position="63"/>
        <end position="137"/>
    </location>
</feature>
<feature type="region of interest" description="Disordered" evidence="5">
    <location>
        <begin position="182"/>
        <end position="220"/>
    </location>
</feature>
<feature type="compositionally biased region" description="Low complexity" evidence="5">
    <location>
        <begin position="11"/>
        <end position="32"/>
    </location>
</feature>
<feature type="compositionally biased region" description="Acidic residues" evidence="5">
    <location>
        <begin position="96"/>
        <end position="107"/>
    </location>
</feature>
<feature type="compositionally biased region" description="Basic and acidic residues" evidence="5">
    <location>
        <begin position="183"/>
        <end position="192"/>
    </location>
</feature>
<feature type="compositionally biased region" description="Acidic residues" evidence="5">
    <location>
        <begin position="194"/>
        <end position="203"/>
    </location>
</feature>
<feature type="compositionally biased region" description="Pro residues" evidence="5">
    <location>
        <begin position="206"/>
        <end position="215"/>
    </location>
</feature>
<feature type="binding site" evidence="4">
    <location>
        <position position="486"/>
    </location>
    <ligand>
        <name>Zn(2+)</name>
        <dbReference type="ChEBI" id="CHEBI:29105"/>
    </ligand>
</feature>
<feature type="binding site" evidence="4">
    <location>
        <position position="489"/>
    </location>
    <ligand>
        <name>Zn(2+)</name>
        <dbReference type="ChEBI" id="CHEBI:29105"/>
    </ligand>
</feature>
<feature type="binding site" evidence="4">
    <location>
        <position position="555"/>
    </location>
    <ligand>
        <name>Zn(2+)</name>
        <dbReference type="ChEBI" id="CHEBI:29105"/>
    </ligand>
</feature>
<feature type="binding site" evidence="4">
    <location>
        <position position="558"/>
    </location>
    <ligand>
        <name>Zn(2+)</name>
        <dbReference type="ChEBI" id="CHEBI:29105"/>
    </ligand>
</feature>
<proteinExistence type="inferred from homology"/>
<sequence>MDEEETAEINAQEQEVAGSAGEAAAGPSGAEVQPNDDSVAVERVIDVFEETAEMEAAMIERFFGPSGEVAEEGTLPVPGPSADGEGSANAGGERPSEEDIVLDDGTESDGSYNRPGSDMSLDSPNSEDDSDVEAMPRWMIPQNRLRFAVDMMVSQARNQDGGIAALLNRDNFLQRVRSMVFSQERRRSRNSDEVSPEAEDDELPEHPPPPPPRPPIDIDMEEGVHFDTNLPAEHSYFGPNLNRVPGVNYQEVGSTHHMLIFLHQYILFPGEVLPFMIDGSLFDDDMSGLDGLIFAVAFPLMKPPEDSKKLYGVTCQIYEKGDNGRHLTFYKSRALQRIVINCSDIKGLPQYIARNPTNKCHSKVKILPEYFLPEPLKCIDMGSMSRFRDIPSMRDKYLRYQISSTPWPVEVCQEYAYEDIVERARKKLEVHKIDTMPKCPIQMSFWLVRNLHLTEKMMSQMFLTDSVNLRLQLIGGILKEETLFYCRYCNSSLAYCSDLFAMSKHGVQTQYCNPGGYIHETNTVYRVISHAIGYSGEPSTRFSWFPGYQWHIILCKFCAQHVGWEFKAVEPNLAPKMFYGLAGSSVRIGKAGDSATVNGNNFVVRNMLRVISEGME</sequence>
<reference key="1">
    <citation type="journal article" date="2005" name="Genome Res.">
        <title>Comparative genome sequencing of Drosophila pseudoobscura: chromosomal, gene, and cis-element evolution.</title>
        <authorList>
            <person name="Richards S."/>
            <person name="Liu Y."/>
            <person name="Bettencourt B.R."/>
            <person name="Hradecky P."/>
            <person name="Letovsky S."/>
            <person name="Nielsen R."/>
            <person name="Thornton K."/>
            <person name="Hubisz M.J."/>
            <person name="Chen R."/>
            <person name="Meisel R.P."/>
            <person name="Couronne O."/>
            <person name="Hua S."/>
            <person name="Smith M.A."/>
            <person name="Zhang P."/>
            <person name="Liu J."/>
            <person name="Bussemaker H.J."/>
            <person name="van Batenburg M.F."/>
            <person name="Howells S.L."/>
            <person name="Scherer S.E."/>
            <person name="Sodergren E."/>
            <person name="Matthews B.B."/>
            <person name="Crosby M.A."/>
            <person name="Schroeder A.J."/>
            <person name="Ortiz-Barrientos D."/>
            <person name="Rives C.M."/>
            <person name="Metzker M.L."/>
            <person name="Muzny D.M."/>
            <person name="Scott G."/>
            <person name="Steffen D."/>
            <person name="Wheeler D.A."/>
            <person name="Worley K.C."/>
            <person name="Havlak P."/>
            <person name="Durbin K.J."/>
            <person name="Egan A."/>
            <person name="Gill R."/>
            <person name="Hume J."/>
            <person name="Morgan M.B."/>
            <person name="Miner G."/>
            <person name="Hamilton C."/>
            <person name="Huang Y."/>
            <person name="Waldron L."/>
            <person name="Verduzco D."/>
            <person name="Clerc-Blankenburg K.P."/>
            <person name="Dubchak I."/>
            <person name="Noor M.A.F."/>
            <person name="Anderson W."/>
            <person name="White K.P."/>
            <person name="Clark A.G."/>
            <person name="Schaeffer S.W."/>
            <person name="Gelbart W.M."/>
            <person name="Weinstock G.M."/>
            <person name="Gibbs R.A."/>
        </authorList>
    </citation>
    <scope>NUCLEOTIDE SEQUENCE [LARGE SCALE GENOMIC DNA]</scope>
    <source>
        <strain>MV2-25 / Tucson 14011-0121.94</strain>
    </source>
</reference>
<gene>
    <name evidence="2" type="primary">ohgt</name>
    <name evidence="2" type="synonym">crbn</name>
    <name type="ORF">GA17779</name>
</gene>
<organism>
    <name type="scientific">Drosophila pseudoobscura pseudoobscura</name>
    <name type="common">Fruit fly</name>
    <dbReference type="NCBI Taxonomy" id="46245"/>
    <lineage>
        <taxon>Eukaryota</taxon>
        <taxon>Metazoa</taxon>
        <taxon>Ecdysozoa</taxon>
        <taxon>Arthropoda</taxon>
        <taxon>Hexapoda</taxon>
        <taxon>Insecta</taxon>
        <taxon>Pterygota</taxon>
        <taxon>Neoptera</taxon>
        <taxon>Endopterygota</taxon>
        <taxon>Diptera</taxon>
        <taxon>Brachycera</taxon>
        <taxon>Muscomorpha</taxon>
        <taxon>Ephydroidea</taxon>
        <taxon>Drosophilidae</taxon>
        <taxon>Drosophila</taxon>
        <taxon>Sophophora</taxon>
    </lineage>
</organism>